<accession>A4WIZ3</accession>
<dbReference type="EMBL" id="CP000660">
    <property type="protein sequence ID" value="ABP50360.1"/>
    <property type="molecule type" value="Genomic_DNA"/>
</dbReference>
<dbReference type="RefSeq" id="WP_011900267.1">
    <property type="nucleotide sequence ID" value="NC_009376.1"/>
</dbReference>
<dbReference type="SMR" id="A4WIZ3"/>
<dbReference type="STRING" id="340102.Pars_0774"/>
<dbReference type="GeneID" id="5054755"/>
<dbReference type="KEGG" id="pas:Pars_0774"/>
<dbReference type="HOGENOM" id="CLU_097347_1_1_2"/>
<dbReference type="OrthoDB" id="30559at2157"/>
<dbReference type="PhylomeDB" id="A4WIZ3"/>
<dbReference type="Proteomes" id="UP000001567">
    <property type="component" value="Chromosome"/>
</dbReference>
<dbReference type="GO" id="GO:0022627">
    <property type="term" value="C:cytosolic small ribosomal subunit"/>
    <property type="evidence" value="ECO:0007669"/>
    <property type="project" value="TreeGrafter"/>
</dbReference>
<dbReference type="GO" id="GO:0019843">
    <property type="term" value="F:rRNA binding"/>
    <property type="evidence" value="ECO:0007669"/>
    <property type="project" value="UniProtKB-UniRule"/>
</dbReference>
<dbReference type="GO" id="GO:0003735">
    <property type="term" value="F:structural constituent of ribosome"/>
    <property type="evidence" value="ECO:0007669"/>
    <property type="project" value="InterPro"/>
</dbReference>
<dbReference type="GO" id="GO:0000028">
    <property type="term" value="P:ribosomal small subunit assembly"/>
    <property type="evidence" value="ECO:0007669"/>
    <property type="project" value="TreeGrafter"/>
</dbReference>
<dbReference type="GO" id="GO:0006412">
    <property type="term" value="P:translation"/>
    <property type="evidence" value="ECO:0007669"/>
    <property type="project" value="UniProtKB-UniRule"/>
</dbReference>
<dbReference type="FunFam" id="3.30.860.10:FF:000002">
    <property type="entry name" value="40S ribosomal protein S15"/>
    <property type="match status" value="1"/>
</dbReference>
<dbReference type="Gene3D" id="3.30.860.10">
    <property type="entry name" value="30s Ribosomal Protein S19, Chain A"/>
    <property type="match status" value="1"/>
</dbReference>
<dbReference type="HAMAP" id="MF_00531">
    <property type="entry name" value="Ribosomal_uS19"/>
    <property type="match status" value="1"/>
</dbReference>
<dbReference type="InterPro" id="IPR002222">
    <property type="entry name" value="Ribosomal_uS19"/>
</dbReference>
<dbReference type="InterPro" id="IPR020934">
    <property type="entry name" value="Ribosomal_uS19_CS"/>
</dbReference>
<dbReference type="InterPro" id="IPR005713">
    <property type="entry name" value="Ribosomal_uS19_euk/arc"/>
</dbReference>
<dbReference type="InterPro" id="IPR023575">
    <property type="entry name" value="Ribosomal_uS19_SF"/>
</dbReference>
<dbReference type="NCBIfam" id="NF003121">
    <property type="entry name" value="PRK04038.1"/>
    <property type="match status" value="1"/>
</dbReference>
<dbReference type="NCBIfam" id="TIGR01025">
    <property type="entry name" value="uS19_arch"/>
    <property type="match status" value="1"/>
</dbReference>
<dbReference type="PANTHER" id="PTHR11880">
    <property type="entry name" value="RIBOSOMAL PROTEIN S19P FAMILY MEMBER"/>
    <property type="match status" value="1"/>
</dbReference>
<dbReference type="PANTHER" id="PTHR11880:SF2">
    <property type="entry name" value="SMALL RIBOSOMAL SUBUNIT PROTEIN US19"/>
    <property type="match status" value="1"/>
</dbReference>
<dbReference type="Pfam" id="PF00203">
    <property type="entry name" value="Ribosomal_S19"/>
    <property type="match status" value="1"/>
</dbReference>
<dbReference type="PIRSF" id="PIRSF002144">
    <property type="entry name" value="Ribosomal_S19"/>
    <property type="match status" value="1"/>
</dbReference>
<dbReference type="PRINTS" id="PR00975">
    <property type="entry name" value="RIBOSOMALS19"/>
</dbReference>
<dbReference type="SUPFAM" id="SSF54570">
    <property type="entry name" value="Ribosomal protein S19"/>
    <property type="match status" value="1"/>
</dbReference>
<dbReference type="PROSITE" id="PS00323">
    <property type="entry name" value="RIBOSOMAL_S19"/>
    <property type="match status" value="1"/>
</dbReference>
<evidence type="ECO:0000255" key="1">
    <source>
        <dbReference type="HAMAP-Rule" id="MF_00531"/>
    </source>
</evidence>
<evidence type="ECO:0000305" key="2"/>
<feature type="chain" id="PRO_0000354323" description="Small ribosomal subunit protein uS19">
    <location>
        <begin position="1"/>
        <end position="159"/>
    </location>
</feature>
<sequence length="159" mass="18207">MSSSKEQEAQKGKQGWITPAVIPPEEWATFRYRGKTLEELLNMPMDEFIKLLPARQRRSLKRGLKPEHRKLLEKIRKAKRLAAQGKKVVIKTHCRDMIILPEMVGLTIQVYNGITYIPVYISPWHIGHYLGEFALTTKIVQHGEPGLKATRSSLHIAAK</sequence>
<protein>
    <recommendedName>
        <fullName evidence="1">Small ribosomal subunit protein uS19</fullName>
    </recommendedName>
    <alternativeName>
        <fullName evidence="2">30S ribosomal protein S19</fullName>
    </alternativeName>
</protein>
<name>RS19_PYRAR</name>
<proteinExistence type="inferred from homology"/>
<organism>
    <name type="scientific">Pyrobaculum arsenaticum (strain DSM 13514 / JCM 11321 / PZ6)</name>
    <dbReference type="NCBI Taxonomy" id="340102"/>
    <lineage>
        <taxon>Archaea</taxon>
        <taxon>Thermoproteota</taxon>
        <taxon>Thermoprotei</taxon>
        <taxon>Thermoproteales</taxon>
        <taxon>Thermoproteaceae</taxon>
        <taxon>Pyrobaculum</taxon>
    </lineage>
</organism>
<gene>
    <name evidence="1" type="primary">rps19</name>
    <name type="ordered locus">Pars_0774</name>
</gene>
<keyword id="KW-0687">Ribonucleoprotein</keyword>
<keyword id="KW-0689">Ribosomal protein</keyword>
<keyword id="KW-0694">RNA-binding</keyword>
<keyword id="KW-0699">rRNA-binding</keyword>
<reference key="1">
    <citation type="submission" date="2007-04" db="EMBL/GenBank/DDBJ databases">
        <title>Complete sequence of Pyrobaculum arsenaticum DSM 13514.</title>
        <authorList>
            <consortium name="US DOE Joint Genome Institute"/>
            <person name="Copeland A."/>
            <person name="Lucas S."/>
            <person name="Lapidus A."/>
            <person name="Barry K."/>
            <person name="Glavina del Rio T."/>
            <person name="Dalin E."/>
            <person name="Tice H."/>
            <person name="Pitluck S."/>
            <person name="Chain P."/>
            <person name="Malfatti S."/>
            <person name="Shin M."/>
            <person name="Vergez L."/>
            <person name="Schmutz J."/>
            <person name="Larimer F."/>
            <person name="Land M."/>
            <person name="Hauser L."/>
            <person name="Kyrpides N."/>
            <person name="Mikhailova N."/>
            <person name="Cozen A.E."/>
            <person name="Fitz-Gibbon S.T."/>
            <person name="House C.H."/>
            <person name="Saltikov C."/>
            <person name="Lowe T.M."/>
            <person name="Richardson P."/>
        </authorList>
    </citation>
    <scope>NUCLEOTIDE SEQUENCE [LARGE SCALE GENOMIC DNA]</scope>
    <source>
        <strain>ATCC 700994 / DSM 13514 / JCM 11321 / PZ6</strain>
    </source>
</reference>
<comment type="function">
    <text evidence="1">Protein S19 forms a complex with S13 that binds strongly to the 16S ribosomal RNA.</text>
</comment>
<comment type="similarity">
    <text evidence="1">Belongs to the universal ribosomal protein uS19 family.</text>
</comment>